<feature type="chain" id="PRO_1000080323" description="Glycerol-3-phosphate dehydrogenase [NAD(P)+]">
    <location>
        <begin position="1"/>
        <end position="338"/>
    </location>
</feature>
<feature type="active site" description="Proton acceptor" evidence="1">
    <location>
        <position position="194"/>
    </location>
</feature>
<feature type="binding site" evidence="1">
    <location>
        <position position="13"/>
    </location>
    <ligand>
        <name>NADPH</name>
        <dbReference type="ChEBI" id="CHEBI:57783"/>
    </ligand>
</feature>
<feature type="binding site" evidence="1">
    <location>
        <position position="14"/>
    </location>
    <ligand>
        <name>NADPH</name>
        <dbReference type="ChEBI" id="CHEBI:57783"/>
    </ligand>
</feature>
<feature type="binding site" evidence="1">
    <location>
        <position position="108"/>
    </location>
    <ligand>
        <name>NADPH</name>
        <dbReference type="ChEBI" id="CHEBI:57783"/>
    </ligand>
</feature>
<feature type="binding site" evidence="1">
    <location>
        <position position="108"/>
    </location>
    <ligand>
        <name>sn-glycerol 3-phosphate</name>
        <dbReference type="ChEBI" id="CHEBI:57597"/>
    </ligand>
</feature>
<feature type="binding site" evidence="1">
    <location>
        <position position="139"/>
    </location>
    <ligand>
        <name>sn-glycerol 3-phosphate</name>
        <dbReference type="ChEBI" id="CHEBI:57597"/>
    </ligand>
</feature>
<feature type="binding site" evidence="1">
    <location>
        <position position="141"/>
    </location>
    <ligand>
        <name>sn-glycerol 3-phosphate</name>
        <dbReference type="ChEBI" id="CHEBI:57597"/>
    </ligand>
</feature>
<feature type="binding site" evidence="1">
    <location>
        <position position="143"/>
    </location>
    <ligand>
        <name>NADPH</name>
        <dbReference type="ChEBI" id="CHEBI:57783"/>
    </ligand>
</feature>
<feature type="binding site" evidence="1">
    <location>
        <position position="194"/>
    </location>
    <ligand>
        <name>sn-glycerol 3-phosphate</name>
        <dbReference type="ChEBI" id="CHEBI:57597"/>
    </ligand>
</feature>
<feature type="binding site" evidence="1">
    <location>
        <position position="247"/>
    </location>
    <ligand>
        <name>sn-glycerol 3-phosphate</name>
        <dbReference type="ChEBI" id="CHEBI:57597"/>
    </ligand>
</feature>
<feature type="binding site" evidence="1">
    <location>
        <position position="257"/>
    </location>
    <ligand>
        <name>sn-glycerol 3-phosphate</name>
        <dbReference type="ChEBI" id="CHEBI:57597"/>
    </ligand>
</feature>
<feature type="binding site" evidence="1">
    <location>
        <position position="258"/>
    </location>
    <ligand>
        <name>NADPH</name>
        <dbReference type="ChEBI" id="CHEBI:57783"/>
    </ligand>
</feature>
<feature type="binding site" evidence="1">
    <location>
        <position position="258"/>
    </location>
    <ligand>
        <name>sn-glycerol 3-phosphate</name>
        <dbReference type="ChEBI" id="CHEBI:57597"/>
    </ligand>
</feature>
<feature type="binding site" evidence="1">
    <location>
        <position position="259"/>
    </location>
    <ligand>
        <name>sn-glycerol 3-phosphate</name>
        <dbReference type="ChEBI" id="CHEBI:57597"/>
    </ligand>
</feature>
<feature type="binding site" evidence="1">
    <location>
        <position position="282"/>
    </location>
    <ligand>
        <name>NADPH</name>
        <dbReference type="ChEBI" id="CHEBI:57783"/>
    </ligand>
</feature>
<feature type="binding site" evidence="1">
    <location>
        <position position="284"/>
    </location>
    <ligand>
        <name>NADPH</name>
        <dbReference type="ChEBI" id="CHEBI:57783"/>
    </ligand>
</feature>
<comment type="function">
    <text evidence="1">Catalyzes the reduction of the glycolytic intermediate dihydroxyacetone phosphate (DHAP) to sn-glycerol 3-phosphate (G3P), the key precursor for phospholipid synthesis.</text>
</comment>
<comment type="catalytic activity">
    <reaction evidence="1">
        <text>sn-glycerol 3-phosphate + NAD(+) = dihydroxyacetone phosphate + NADH + H(+)</text>
        <dbReference type="Rhea" id="RHEA:11092"/>
        <dbReference type="ChEBI" id="CHEBI:15378"/>
        <dbReference type="ChEBI" id="CHEBI:57540"/>
        <dbReference type="ChEBI" id="CHEBI:57597"/>
        <dbReference type="ChEBI" id="CHEBI:57642"/>
        <dbReference type="ChEBI" id="CHEBI:57945"/>
        <dbReference type="EC" id="1.1.1.94"/>
    </reaction>
    <physiologicalReaction direction="right-to-left" evidence="1">
        <dbReference type="Rhea" id="RHEA:11094"/>
    </physiologicalReaction>
</comment>
<comment type="catalytic activity">
    <reaction evidence="1">
        <text>sn-glycerol 3-phosphate + NADP(+) = dihydroxyacetone phosphate + NADPH + H(+)</text>
        <dbReference type="Rhea" id="RHEA:11096"/>
        <dbReference type="ChEBI" id="CHEBI:15378"/>
        <dbReference type="ChEBI" id="CHEBI:57597"/>
        <dbReference type="ChEBI" id="CHEBI:57642"/>
        <dbReference type="ChEBI" id="CHEBI:57783"/>
        <dbReference type="ChEBI" id="CHEBI:58349"/>
        <dbReference type="EC" id="1.1.1.94"/>
    </reaction>
    <physiologicalReaction direction="right-to-left" evidence="1">
        <dbReference type="Rhea" id="RHEA:11098"/>
    </physiologicalReaction>
</comment>
<comment type="pathway">
    <text evidence="1">Membrane lipid metabolism; glycerophospholipid metabolism.</text>
</comment>
<comment type="subcellular location">
    <subcellularLocation>
        <location evidence="1">Cytoplasm</location>
    </subcellularLocation>
</comment>
<comment type="similarity">
    <text evidence="1">Belongs to the NAD-dependent glycerol-3-phosphate dehydrogenase family.</text>
</comment>
<sequence>MDKQRVAVIGPGSWGTALSQVLNDNGHEVRIWGNIAEQIDEINQAHTNTRYFKDTVLDEKIKAYHSLAEALDGADAVLFVVPTKVTRLVAKQVAQILDHNVKVMHASKGLEPDSHERISTILEEEIPSELRSEIVVVSGPSHAEETIVRDITLITAASKDLEAAKYVQKLFSNHYFRLYTNTDVVGVETAGALKNIIAVGAGALHGLGYGDNAKAAIITRGLAEITRLGVKLGASPLTYSGLSGVGDLIVTGTSIHSRNWRAGDALGRGEKLADIEANMGMVIEGISTTKAAYELAQELDVYMPITQAIYKVIYQGHDIKEAIFEIMNNEFKAENEWS</sequence>
<name>GPDA_STRGC</name>
<accession>A8AUM5</accession>
<protein>
    <recommendedName>
        <fullName evidence="1">Glycerol-3-phosphate dehydrogenase [NAD(P)+]</fullName>
        <ecNumber evidence="1">1.1.1.94</ecNumber>
    </recommendedName>
    <alternativeName>
        <fullName evidence="1">NAD(P)(+)-dependent glycerol-3-phosphate dehydrogenase</fullName>
    </alternativeName>
    <alternativeName>
        <fullName evidence="1">NAD(P)H-dependent dihydroxyacetone-phosphate reductase</fullName>
    </alternativeName>
</protein>
<organism>
    <name type="scientific">Streptococcus gordonii (strain Challis / ATCC 35105 / BCRC 15272 / CH1 / DL1 / V288)</name>
    <dbReference type="NCBI Taxonomy" id="467705"/>
    <lineage>
        <taxon>Bacteria</taxon>
        <taxon>Bacillati</taxon>
        <taxon>Bacillota</taxon>
        <taxon>Bacilli</taxon>
        <taxon>Lactobacillales</taxon>
        <taxon>Streptococcaceae</taxon>
        <taxon>Streptococcus</taxon>
    </lineage>
</organism>
<dbReference type="EC" id="1.1.1.94" evidence="1"/>
<dbReference type="EMBL" id="CP000725">
    <property type="protein sequence ID" value="ABV10937.1"/>
    <property type="molecule type" value="Genomic_DNA"/>
</dbReference>
<dbReference type="RefSeq" id="WP_011999706.1">
    <property type="nucleotide sequence ID" value="NC_009785.1"/>
</dbReference>
<dbReference type="SMR" id="A8AUM5"/>
<dbReference type="STRING" id="467705.SGO_0164"/>
<dbReference type="KEGG" id="sgo:SGO_0164"/>
<dbReference type="eggNOG" id="COG0240">
    <property type="taxonomic scope" value="Bacteria"/>
</dbReference>
<dbReference type="HOGENOM" id="CLU_033449_0_2_9"/>
<dbReference type="UniPathway" id="UPA00940"/>
<dbReference type="Proteomes" id="UP000001131">
    <property type="component" value="Chromosome"/>
</dbReference>
<dbReference type="GO" id="GO:0005829">
    <property type="term" value="C:cytosol"/>
    <property type="evidence" value="ECO:0007669"/>
    <property type="project" value="TreeGrafter"/>
</dbReference>
<dbReference type="GO" id="GO:0047952">
    <property type="term" value="F:glycerol-3-phosphate dehydrogenase [NAD(P)+] activity"/>
    <property type="evidence" value="ECO:0007669"/>
    <property type="project" value="UniProtKB-UniRule"/>
</dbReference>
<dbReference type="GO" id="GO:0051287">
    <property type="term" value="F:NAD binding"/>
    <property type="evidence" value="ECO:0007669"/>
    <property type="project" value="InterPro"/>
</dbReference>
<dbReference type="GO" id="GO:0005975">
    <property type="term" value="P:carbohydrate metabolic process"/>
    <property type="evidence" value="ECO:0007669"/>
    <property type="project" value="InterPro"/>
</dbReference>
<dbReference type="GO" id="GO:0046167">
    <property type="term" value="P:glycerol-3-phosphate biosynthetic process"/>
    <property type="evidence" value="ECO:0007669"/>
    <property type="project" value="UniProtKB-UniRule"/>
</dbReference>
<dbReference type="GO" id="GO:0046168">
    <property type="term" value="P:glycerol-3-phosphate catabolic process"/>
    <property type="evidence" value="ECO:0007669"/>
    <property type="project" value="InterPro"/>
</dbReference>
<dbReference type="GO" id="GO:0006650">
    <property type="term" value="P:glycerophospholipid metabolic process"/>
    <property type="evidence" value="ECO:0007669"/>
    <property type="project" value="UniProtKB-UniRule"/>
</dbReference>
<dbReference type="GO" id="GO:0008654">
    <property type="term" value="P:phospholipid biosynthetic process"/>
    <property type="evidence" value="ECO:0007669"/>
    <property type="project" value="UniProtKB-KW"/>
</dbReference>
<dbReference type="FunFam" id="1.10.1040.10:FF:000001">
    <property type="entry name" value="Glycerol-3-phosphate dehydrogenase [NAD(P)+]"/>
    <property type="match status" value="1"/>
</dbReference>
<dbReference type="FunFam" id="3.40.50.720:FF:000019">
    <property type="entry name" value="Glycerol-3-phosphate dehydrogenase [NAD(P)+]"/>
    <property type="match status" value="1"/>
</dbReference>
<dbReference type="Gene3D" id="1.10.1040.10">
    <property type="entry name" value="N-(1-d-carboxylethyl)-l-norvaline Dehydrogenase, domain 2"/>
    <property type="match status" value="1"/>
</dbReference>
<dbReference type="Gene3D" id="3.40.50.720">
    <property type="entry name" value="NAD(P)-binding Rossmann-like Domain"/>
    <property type="match status" value="1"/>
</dbReference>
<dbReference type="HAMAP" id="MF_00394">
    <property type="entry name" value="NAD_Glyc3P_dehydrog"/>
    <property type="match status" value="1"/>
</dbReference>
<dbReference type="InterPro" id="IPR008927">
    <property type="entry name" value="6-PGluconate_DH-like_C_sf"/>
</dbReference>
<dbReference type="InterPro" id="IPR013328">
    <property type="entry name" value="6PGD_dom2"/>
</dbReference>
<dbReference type="InterPro" id="IPR006168">
    <property type="entry name" value="G3P_DH_NAD-dep"/>
</dbReference>
<dbReference type="InterPro" id="IPR006109">
    <property type="entry name" value="G3P_DH_NAD-dep_C"/>
</dbReference>
<dbReference type="InterPro" id="IPR011128">
    <property type="entry name" value="G3P_DH_NAD-dep_N"/>
</dbReference>
<dbReference type="InterPro" id="IPR036291">
    <property type="entry name" value="NAD(P)-bd_dom_sf"/>
</dbReference>
<dbReference type="NCBIfam" id="NF000940">
    <property type="entry name" value="PRK00094.1-2"/>
    <property type="match status" value="1"/>
</dbReference>
<dbReference type="NCBIfam" id="NF000941">
    <property type="entry name" value="PRK00094.1-3"/>
    <property type="match status" value="1"/>
</dbReference>
<dbReference type="NCBIfam" id="NF000942">
    <property type="entry name" value="PRK00094.1-4"/>
    <property type="match status" value="1"/>
</dbReference>
<dbReference type="PANTHER" id="PTHR11728">
    <property type="entry name" value="GLYCEROL-3-PHOSPHATE DEHYDROGENASE"/>
    <property type="match status" value="1"/>
</dbReference>
<dbReference type="PANTHER" id="PTHR11728:SF1">
    <property type="entry name" value="GLYCEROL-3-PHOSPHATE DEHYDROGENASE [NAD(+)] 2, CHLOROPLASTIC"/>
    <property type="match status" value="1"/>
</dbReference>
<dbReference type="Pfam" id="PF07479">
    <property type="entry name" value="NAD_Gly3P_dh_C"/>
    <property type="match status" value="1"/>
</dbReference>
<dbReference type="Pfam" id="PF01210">
    <property type="entry name" value="NAD_Gly3P_dh_N"/>
    <property type="match status" value="1"/>
</dbReference>
<dbReference type="PIRSF" id="PIRSF000114">
    <property type="entry name" value="Glycerol-3-P_dh"/>
    <property type="match status" value="1"/>
</dbReference>
<dbReference type="PRINTS" id="PR00077">
    <property type="entry name" value="GPDHDRGNASE"/>
</dbReference>
<dbReference type="SUPFAM" id="SSF48179">
    <property type="entry name" value="6-phosphogluconate dehydrogenase C-terminal domain-like"/>
    <property type="match status" value="1"/>
</dbReference>
<dbReference type="SUPFAM" id="SSF51735">
    <property type="entry name" value="NAD(P)-binding Rossmann-fold domains"/>
    <property type="match status" value="1"/>
</dbReference>
<dbReference type="PROSITE" id="PS00957">
    <property type="entry name" value="NAD_G3PDH"/>
    <property type="match status" value="1"/>
</dbReference>
<gene>
    <name evidence="1" type="primary">gpsA</name>
    <name type="ordered locus">SGO_0164</name>
</gene>
<keyword id="KW-0963">Cytoplasm</keyword>
<keyword id="KW-0444">Lipid biosynthesis</keyword>
<keyword id="KW-0443">Lipid metabolism</keyword>
<keyword id="KW-0520">NAD</keyword>
<keyword id="KW-0521">NADP</keyword>
<keyword id="KW-0547">Nucleotide-binding</keyword>
<keyword id="KW-0560">Oxidoreductase</keyword>
<keyword id="KW-0594">Phospholipid biosynthesis</keyword>
<keyword id="KW-1208">Phospholipid metabolism</keyword>
<keyword id="KW-1185">Reference proteome</keyword>
<proteinExistence type="inferred from homology"/>
<reference key="1">
    <citation type="journal article" date="2007" name="J. Bacteriol.">
        <title>Genome-wide transcriptional changes in Streptococcus gordonii in response to competence signaling peptide.</title>
        <authorList>
            <person name="Vickerman M.M."/>
            <person name="Iobst S."/>
            <person name="Jesionowski A.M."/>
            <person name="Gill S.R."/>
        </authorList>
    </citation>
    <scope>NUCLEOTIDE SEQUENCE [LARGE SCALE GENOMIC DNA]</scope>
    <source>
        <strain>Challis / ATCC 35105 / BCRC 15272 / CH1 / DL1 / V288</strain>
    </source>
</reference>
<evidence type="ECO:0000255" key="1">
    <source>
        <dbReference type="HAMAP-Rule" id="MF_00394"/>
    </source>
</evidence>